<comment type="function">
    <text evidence="2 3">Voltage-dependent rectifying anion channel that facilitates the translocation between chloroplast and cytoplasm of phosphorylated carbohydrates such as triosephosphate, 3-phosphoglycerate and inorganic phosphate (Pi) depending of ATP to triosephosphate ratio in the plastidial intermembrane space; in high triosephosphate/ATP conditions (e.g. photosynthesis), export of triosphosphate from chloroplast (outward rectifying channels), but in high ATP/triosephosphate conditions (e.g. dark phase), import of phosphosolutes (inward rectifying channels).</text>
</comment>
<comment type="subcellular location">
    <subcellularLocation>
        <location evidence="2">Plastid</location>
        <location evidence="2">Etioplast membrane</location>
        <topology evidence="2">Multi-pass membrane protein</topology>
    </subcellularLocation>
    <subcellularLocation>
        <location evidence="2">Plastid</location>
        <location evidence="2">Chloroplast outer membrane</location>
        <topology evidence="2">Multi-pass membrane protein</topology>
    </subcellularLocation>
    <text>Present in non-green root plastids.</text>
</comment>
<comment type="tissue specificity">
    <text evidence="2">Present in roots, shoots and leaves.</text>
</comment>
<comment type="similarity">
    <text evidence="4">Belongs to the plastid outer envelope porin OEP21 (TC 1.B.29) family.</text>
</comment>
<accession>Q9SM57</accession>
<sequence length="177" mass="20444">METSLRYGGDSKALKIHAKEKLRIDTNTFFQVRGGLDTKTGQPSSGSALIRHFYPNFSATLGVGVRYDKQDSVGVRYAKNDKLRYTVLAKKTFPVTNDGLVNFKIKGGCDVDQDFKEWKSRGGAEFSWNVFNFQKDQDVRLRIGYEAFEQVPYLQIRENNWTFNADYKGRWNVRYDL</sequence>
<gene>
    <name type="primary">OEP21</name>
</gene>
<keyword id="KW-0002">3D-structure</keyword>
<keyword id="KW-0150">Chloroplast</keyword>
<keyword id="KW-0406">Ion transport</keyword>
<keyword id="KW-0472">Membrane</keyword>
<keyword id="KW-0934">Plastid</keyword>
<keyword id="KW-1002">Plastid outer membrane</keyword>
<keyword id="KW-0626">Porin</keyword>
<keyword id="KW-0812">Transmembrane</keyword>
<keyword id="KW-1134">Transmembrane beta strand</keyword>
<keyword id="KW-0813">Transport</keyword>
<evidence type="ECO:0000255" key="1"/>
<evidence type="ECO:0000269" key="2">
    <source>
    </source>
</evidence>
<evidence type="ECO:0000269" key="3">
    <source>
    </source>
</evidence>
<evidence type="ECO:0000305" key="4"/>
<evidence type="ECO:0007829" key="5">
    <source>
        <dbReference type="PDB" id="7BGH"/>
    </source>
</evidence>
<name>OEP21_PEA</name>
<reference key="1">
    <citation type="journal article" date="1999" name="EMBO J.">
        <title>A rectifying ATP-regulated solute channel in the chloroplastic outer envelope from pea.</title>
        <authorList>
            <person name="Boelter B."/>
            <person name="Soll J."/>
            <person name="Hill K."/>
            <person name="Hemmler R."/>
            <person name="Wagner R."/>
        </authorList>
    </citation>
    <scope>NUCLEOTIDE SEQUENCE [GENOMIC DNA]</scope>
    <scope>FUNCTION</scope>
    <scope>SUBCELLULAR LOCATION</scope>
    <scope>TISSUE SPECIFICITY</scope>
    <source>
        <strain>cv. Golf</strain>
        <tissue>Leaf</tissue>
    </source>
</reference>
<reference key="2">
    <citation type="journal article" date="2006" name="J. Biol. Chem.">
        <title>Molecular properties of Oep21, an ATP-regulated anion-selective solute channel from the outer chloroplast membrane.</title>
        <authorList>
            <person name="Hemmler R."/>
            <person name="Becker T."/>
            <person name="Schleiff E."/>
            <person name="Boelter B."/>
            <person name="Stahl T."/>
            <person name="Soll J."/>
            <person name="Goetze T.A."/>
            <person name="Braams S."/>
            <person name="Wagner R."/>
        </authorList>
    </citation>
    <scope>FUNCTION</scope>
    <scope>TOPOLOGY</scope>
    <scope>MUTAGENESIS OF 163-PHE--LYS-168</scope>
    <source>
        <strain>cv. Golf</strain>
    </source>
</reference>
<dbReference type="EMBL" id="AJ009987">
    <property type="protein sequence ID" value="CAB58442.1"/>
    <property type="molecule type" value="Genomic_DNA"/>
</dbReference>
<dbReference type="PDB" id="7BGH">
    <property type="method" value="NMR"/>
    <property type="chains" value="A=1-177"/>
</dbReference>
<dbReference type="PDBsum" id="7BGH"/>
<dbReference type="SMR" id="Q9SM57"/>
<dbReference type="TCDB" id="1.B.29.1.1">
    <property type="family name" value="the plastid outer envelope porin of 21 kda (oep21) family"/>
</dbReference>
<dbReference type="EnsemblPlants" id="Psat5g008840.1">
    <property type="protein sequence ID" value="Psat5g008840.1.cds"/>
    <property type="gene ID" value="Psat5g008840"/>
</dbReference>
<dbReference type="Gramene" id="Psat5g008840.1">
    <property type="protein sequence ID" value="Psat5g008840.1.cds"/>
    <property type="gene ID" value="Psat5g008840"/>
</dbReference>
<dbReference type="OrthoDB" id="503907at2759"/>
<dbReference type="GO" id="GO:0009707">
    <property type="term" value="C:chloroplast outer membrane"/>
    <property type="evidence" value="ECO:0000314"/>
    <property type="project" value="UniProtKB"/>
</dbReference>
<dbReference type="GO" id="GO:0034426">
    <property type="term" value="C:etioplast membrane"/>
    <property type="evidence" value="ECO:0000314"/>
    <property type="project" value="UniProtKB"/>
</dbReference>
<dbReference type="GO" id="GO:0046930">
    <property type="term" value="C:pore complex"/>
    <property type="evidence" value="ECO:0007669"/>
    <property type="project" value="UniProtKB-KW"/>
</dbReference>
<dbReference type="GO" id="GO:0015288">
    <property type="term" value="F:porin activity"/>
    <property type="evidence" value="ECO:0000314"/>
    <property type="project" value="UniProtKB"/>
</dbReference>
<dbReference type="GO" id="GO:0008308">
    <property type="term" value="F:voltage-gated monoatomic anion channel activity"/>
    <property type="evidence" value="ECO:0000314"/>
    <property type="project" value="UniProtKB"/>
</dbReference>
<dbReference type="GO" id="GO:0044070">
    <property type="term" value="P:regulation of monoatomic anion transport"/>
    <property type="evidence" value="ECO:0000314"/>
    <property type="project" value="UniProtKB"/>
</dbReference>
<dbReference type="InterPro" id="IPR034575">
    <property type="entry name" value="OEP21"/>
</dbReference>
<dbReference type="PANTHER" id="PTHR35993">
    <property type="entry name" value="OUTER ENVELOPE PORE PROTEIN 21B, CHLOROPLASTIC"/>
    <property type="match status" value="1"/>
</dbReference>
<dbReference type="PANTHER" id="PTHR35993:SF1">
    <property type="entry name" value="OUTER ENVELOPE PORE PROTEIN 21B, CHLOROPLASTIC"/>
    <property type="match status" value="1"/>
</dbReference>
<organism>
    <name type="scientific">Pisum sativum</name>
    <name type="common">Garden pea</name>
    <name type="synonym">Lathyrus oleraceus</name>
    <dbReference type="NCBI Taxonomy" id="3888"/>
    <lineage>
        <taxon>Eukaryota</taxon>
        <taxon>Viridiplantae</taxon>
        <taxon>Streptophyta</taxon>
        <taxon>Embryophyta</taxon>
        <taxon>Tracheophyta</taxon>
        <taxon>Spermatophyta</taxon>
        <taxon>Magnoliopsida</taxon>
        <taxon>eudicotyledons</taxon>
        <taxon>Gunneridae</taxon>
        <taxon>Pentapetalae</taxon>
        <taxon>rosids</taxon>
        <taxon>fabids</taxon>
        <taxon>Fabales</taxon>
        <taxon>Fabaceae</taxon>
        <taxon>Papilionoideae</taxon>
        <taxon>50 kb inversion clade</taxon>
        <taxon>NPAAA clade</taxon>
        <taxon>Hologalegina</taxon>
        <taxon>IRL clade</taxon>
        <taxon>Fabeae</taxon>
        <taxon>Pisum</taxon>
    </lineage>
</organism>
<feature type="chain" id="PRO_0000415551" description="Outer envelope pore protein 21, chloroplastic">
    <location>
        <begin position="1"/>
        <end position="177"/>
    </location>
</feature>
<feature type="topological domain" description="Cytoplasmic" evidence="1">
    <location>
        <begin position="1"/>
        <end position="21"/>
    </location>
</feature>
<feature type="transmembrane region" description="Beta stranded; Name=1" evidence="1">
    <location>
        <begin position="22"/>
        <end position="31"/>
    </location>
</feature>
<feature type="topological domain" description="Chloroplast intermembrane" evidence="1">
    <location>
        <begin position="32"/>
        <end position="55"/>
    </location>
</feature>
<feature type="transmembrane region" description="Beta stranded; Name=2" evidence="1">
    <location>
        <begin position="56"/>
        <end position="65"/>
    </location>
</feature>
<feature type="topological domain" description="Cytoplasmic" evidence="1">
    <location>
        <begin position="66"/>
        <end position="81"/>
    </location>
</feature>
<feature type="transmembrane region" description="Beta stranded; Name=3" evidence="1">
    <location>
        <begin position="82"/>
        <end position="91"/>
    </location>
</feature>
<feature type="topological domain" description="Chloroplast intermembrane" evidence="1">
    <location>
        <begin position="92"/>
        <end position="97"/>
    </location>
</feature>
<feature type="transmembrane region" description="Beta stranded; Name=4" evidence="1">
    <location>
        <begin position="98"/>
        <end position="107"/>
    </location>
</feature>
<feature type="topological domain" description="Cytoplasmic" evidence="1">
    <location>
        <begin position="108"/>
        <end position="120"/>
    </location>
</feature>
<feature type="transmembrane region" description="Beta stranded; Name=5" evidence="1">
    <location>
        <begin position="121"/>
        <end position="130"/>
    </location>
</feature>
<feature type="topological domain" description="Chloroplast intermembrane" evidence="1">
    <location>
        <begin position="131"/>
        <end position="137"/>
    </location>
</feature>
<feature type="transmembrane region" description="Beta stranded; Name=6" evidence="1">
    <location>
        <begin position="138"/>
        <end position="147"/>
    </location>
</feature>
<feature type="topological domain" description="Cytoplasmic" evidence="1">
    <location>
        <begin position="148"/>
        <end position="152"/>
    </location>
</feature>
<feature type="transmembrane region" description="Beta stranded; Name=7" evidence="1">
    <location>
        <begin position="153"/>
        <end position="162"/>
    </location>
</feature>
<feature type="topological domain" description="Chloroplast intermembrane" evidence="1">
    <location>
        <begin position="163"/>
        <end position="168"/>
    </location>
</feature>
<feature type="transmembrane region" description="Beta stranded; Name=8" evidence="1">
    <location>
        <begin position="169"/>
        <end position="177"/>
    </location>
</feature>
<feature type="mutagenesis site" description="Reduced ion selectivity tuning." evidence="3">
    <location>
        <begin position="163"/>
        <end position="168"/>
    </location>
</feature>
<feature type="strand" evidence="5">
    <location>
        <begin position="2"/>
        <end position="11"/>
    </location>
</feature>
<feature type="strand" evidence="5">
    <location>
        <begin position="13"/>
        <end position="25"/>
    </location>
</feature>
<feature type="strand" evidence="5">
    <location>
        <begin position="28"/>
        <end position="36"/>
    </location>
</feature>
<feature type="strand" evidence="5">
    <location>
        <begin position="40"/>
        <end position="42"/>
    </location>
</feature>
<feature type="strand" evidence="5">
    <location>
        <begin position="44"/>
        <end position="54"/>
    </location>
</feature>
<feature type="turn" evidence="5">
    <location>
        <begin position="55"/>
        <end position="58"/>
    </location>
</feature>
<feature type="strand" evidence="5">
    <location>
        <begin position="59"/>
        <end position="68"/>
    </location>
</feature>
<feature type="strand" evidence="5">
    <location>
        <begin position="74"/>
        <end position="76"/>
    </location>
</feature>
<feature type="strand" evidence="5">
    <location>
        <begin position="79"/>
        <end position="95"/>
    </location>
</feature>
<feature type="turn" evidence="5">
    <location>
        <begin position="96"/>
        <end position="99"/>
    </location>
</feature>
<feature type="strand" evidence="5">
    <location>
        <begin position="100"/>
        <end position="113"/>
    </location>
</feature>
<feature type="strand" evidence="5">
    <location>
        <begin position="118"/>
        <end position="128"/>
    </location>
</feature>
<feature type="strand" evidence="5">
    <location>
        <begin position="140"/>
        <end position="146"/>
    </location>
</feature>
<feature type="turn" evidence="5">
    <location>
        <begin position="147"/>
        <end position="150"/>
    </location>
</feature>
<feature type="strand" evidence="5">
    <location>
        <begin position="151"/>
        <end position="158"/>
    </location>
</feature>
<feature type="strand" evidence="5">
    <location>
        <begin position="161"/>
        <end position="166"/>
    </location>
</feature>
<feature type="turn" evidence="5">
    <location>
        <begin position="167"/>
        <end position="169"/>
    </location>
</feature>
<feature type="strand" evidence="5">
    <location>
        <begin position="170"/>
        <end position="176"/>
    </location>
</feature>
<proteinExistence type="evidence at protein level"/>
<protein>
    <recommendedName>
        <fullName>Outer envelope pore protein 21, chloroplastic</fullName>
    </recommendedName>
    <alternativeName>
        <fullName>Chloroplastic outer envelope pore protein of 21 kDa</fullName>
        <shortName>gOEP21</shortName>
    </alternativeName>
</protein>